<name>RIMO_SULDN</name>
<reference key="1">
    <citation type="journal article" date="2008" name="Appl. Environ. Microbiol.">
        <title>Genome of the epsilonproteobacterial chemolithoautotroph Sulfurimonas denitrificans.</title>
        <authorList>
            <person name="Sievert S.M."/>
            <person name="Scott K.M."/>
            <person name="Klotz M.G."/>
            <person name="Chain P.S.G."/>
            <person name="Hauser L.J."/>
            <person name="Hemp J."/>
            <person name="Huegler M."/>
            <person name="Land M."/>
            <person name="Lapidus A."/>
            <person name="Larimer F.W."/>
            <person name="Lucas S."/>
            <person name="Malfatti S.A."/>
            <person name="Meyer F."/>
            <person name="Paulsen I.T."/>
            <person name="Ren Q."/>
            <person name="Simon J."/>
            <person name="Bailey K."/>
            <person name="Diaz E."/>
            <person name="Fitzpatrick K.A."/>
            <person name="Glover B."/>
            <person name="Gwatney N."/>
            <person name="Korajkic A."/>
            <person name="Long A."/>
            <person name="Mobberley J.M."/>
            <person name="Pantry S.N."/>
            <person name="Pazder G."/>
            <person name="Peterson S."/>
            <person name="Quintanilla J.D."/>
            <person name="Sprinkle R."/>
            <person name="Stephens J."/>
            <person name="Thomas P."/>
            <person name="Vaughn R."/>
            <person name="Weber M.J."/>
            <person name="Wooten L.L."/>
        </authorList>
    </citation>
    <scope>NUCLEOTIDE SEQUENCE [LARGE SCALE GENOMIC DNA]</scope>
    <source>
        <strain>ATCC 33889 / DSM 1251</strain>
    </source>
</reference>
<accession>Q30PS0</accession>
<comment type="function">
    <text evidence="1">Catalyzes the methylthiolation of an aspartic acid residue of ribosomal protein uS12.</text>
</comment>
<comment type="catalytic activity">
    <reaction evidence="1">
        <text>L-aspartate(89)-[ribosomal protein uS12]-hydrogen + (sulfur carrier)-SH + AH2 + 2 S-adenosyl-L-methionine = 3-methylsulfanyl-L-aspartate(89)-[ribosomal protein uS12]-hydrogen + (sulfur carrier)-H + 5'-deoxyadenosine + L-methionine + A + S-adenosyl-L-homocysteine + 2 H(+)</text>
        <dbReference type="Rhea" id="RHEA:37087"/>
        <dbReference type="Rhea" id="RHEA-COMP:10460"/>
        <dbReference type="Rhea" id="RHEA-COMP:10461"/>
        <dbReference type="Rhea" id="RHEA-COMP:14737"/>
        <dbReference type="Rhea" id="RHEA-COMP:14739"/>
        <dbReference type="ChEBI" id="CHEBI:13193"/>
        <dbReference type="ChEBI" id="CHEBI:15378"/>
        <dbReference type="ChEBI" id="CHEBI:17319"/>
        <dbReference type="ChEBI" id="CHEBI:17499"/>
        <dbReference type="ChEBI" id="CHEBI:29917"/>
        <dbReference type="ChEBI" id="CHEBI:29961"/>
        <dbReference type="ChEBI" id="CHEBI:57844"/>
        <dbReference type="ChEBI" id="CHEBI:57856"/>
        <dbReference type="ChEBI" id="CHEBI:59789"/>
        <dbReference type="ChEBI" id="CHEBI:64428"/>
        <dbReference type="ChEBI" id="CHEBI:73599"/>
        <dbReference type="EC" id="2.8.4.4"/>
    </reaction>
</comment>
<comment type="cofactor">
    <cofactor evidence="1">
        <name>[4Fe-4S] cluster</name>
        <dbReference type="ChEBI" id="CHEBI:49883"/>
    </cofactor>
    <text evidence="1">Binds 2 [4Fe-4S] clusters. One cluster is coordinated with 3 cysteines and an exchangeable S-adenosyl-L-methionine.</text>
</comment>
<comment type="subcellular location">
    <subcellularLocation>
        <location evidence="1">Cytoplasm</location>
    </subcellularLocation>
</comment>
<comment type="similarity">
    <text evidence="1">Belongs to the methylthiotransferase family. RimO subfamily.</text>
</comment>
<protein>
    <recommendedName>
        <fullName evidence="1">Ribosomal protein uS12 methylthiotransferase RimO</fullName>
        <shortName evidence="1">uS12 MTTase</shortName>
        <shortName evidence="1">uS12 methylthiotransferase</shortName>
        <ecNumber evidence="1">2.8.4.4</ecNumber>
    </recommendedName>
    <alternativeName>
        <fullName evidence="1">Ribosomal protein uS12 (aspartate-C(3))-methylthiotransferase</fullName>
    </alternativeName>
    <alternativeName>
        <fullName evidence="1">Ribosome maturation factor RimO</fullName>
    </alternativeName>
</protein>
<keyword id="KW-0004">4Fe-4S</keyword>
<keyword id="KW-0963">Cytoplasm</keyword>
<keyword id="KW-0408">Iron</keyword>
<keyword id="KW-0411">Iron-sulfur</keyword>
<keyword id="KW-0479">Metal-binding</keyword>
<keyword id="KW-1185">Reference proteome</keyword>
<keyword id="KW-0949">S-adenosyl-L-methionine</keyword>
<keyword id="KW-0808">Transferase</keyword>
<feature type="chain" id="PRO_0000375026" description="Ribosomal protein uS12 methylthiotransferase RimO">
    <location>
        <begin position="1"/>
        <end position="439"/>
    </location>
</feature>
<feature type="domain" description="MTTase N-terminal" evidence="1">
    <location>
        <begin position="3"/>
        <end position="115"/>
    </location>
</feature>
<feature type="domain" description="Radical SAM core" evidence="2">
    <location>
        <begin position="132"/>
        <end position="361"/>
    </location>
</feature>
<feature type="binding site" evidence="1">
    <location>
        <position position="12"/>
    </location>
    <ligand>
        <name>[4Fe-4S] cluster</name>
        <dbReference type="ChEBI" id="CHEBI:49883"/>
        <label>1</label>
    </ligand>
</feature>
<feature type="binding site" evidence="1">
    <location>
        <position position="46"/>
    </location>
    <ligand>
        <name>[4Fe-4S] cluster</name>
        <dbReference type="ChEBI" id="CHEBI:49883"/>
        <label>1</label>
    </ligand>
</feature>
<feature type="binding site" evidence="1">
    <location>
        <position position="78"/>
    </location>
    <ligand>
        <name>[4Fe-4S] cluster</name>
        <dbReference type="ChEBI" id="CHEBI:49883"/>
        <label>1</label>
    </ligand>
</feature>
<feature type="binding site" evidence="1">
    <location>
        <position position="146"/>
    </location>
    <ligand>
        <name>[4Fe-4S] cluster</name>
        <dbReference type="ChEBI" id="CHEBI:49883"/>
        <label>2</label>
        <note>4Fe-4S-S-AdoMet</note>
    </ligand>
</feature>
<feature type="binding site" evidence="1">
    <location>
        <position position="150"/>
    </location>
    <ligand>
        <name>[4Fe-4S] cluster</name>
        <dbReference type="ChEBI" id="CHEBI:49883"/>
        <label>2</label>
        <note>4Fe-4S-S-AdoMet</note>
    </ligand>
</feature>
<feature type="binding site" evidence="1">
    <location>
        <position position="153"/>
    </location>
    <ligand>
        <name>[4Fe-4S] cluster</name>
        <dbReference type="ChEBI" id="CHEBI:49883"/>
        <label>2</label>
        <note>4Fe-4S-S-AdoMet</note>
    </ligand>
</feature>
<sequence length="439" mass="49288">MGNKLHIVSLGCTKNLVDTEVMMGKLQNFELTDNQSDADVIIVNTCGFIDAAKQESINTVLNLHDARKEDSVLVMAGCLSERYKEELAKDMPEVDIFTGVGDYDKIDELLVEKKSRFSEAVYLIDGAERVVTGSTYHAYIKLSEGCNQTCSFCAIPSFKGKLNSRTLDSIAKEVESLVKKGYWDFSFVSQDSSSYLRDKNVKDGLSLLIQRVELIEGVKSARILYLYPSTTSMALLKNIAKSEIFHNYFDMPIQHINDDMLRIMKRGFGKKQTLELLEFMKSLPNSFIRTSFIVGHPGESQEMFDEMCKFASSFGFERINVFAYSDEETTPAHEMSDKIAAKVINKRASILGKIAADVMQASLKKEIGKETLLVIDKESDEHEYLLSARKILWAPDIDGEIYVNDRSGEEELNFGAIYNAEITDMVGNILTATTKNASR</sequence>
<gene>
    <name evidence="1" type="primary">rimO</name>
    <name type="ordered locus">Suden_1737</name>
</gene>
<proteinExistence type="inferred from homology"/>
<organism>
    <name type="scientific">Sulfurimonas denitrificans (strain ATCC 33889 / DSM 1251)</name>
    <name type="common">Thiomicrospira denitrificans (strain ATCC 33889 / DSM 1251)</name>
    <dbReference type="NCBI Taxonomy" id="326298"/>
    <lineage>
        <taxon>Bacteria</taxon>
        <taxon>Pseudomonadati</taxon>
        <taxon>Campylobacterota</taxon>
        <taxon>Epsilonproteobacteria</taxon>
        <taxon>Campylobacterales</taxon>
        <taxon>Sulfurimonadaceae</taxon>
        <taxon>Sulfurimonas</taxon>
    </lineage>
</organism>
<dbReference type="EC" id="2.8.4.4" evidence="1"/>
<dbReference type="EMBL" id="CP000153">
    <property type="protein sequence ID" value="ABB45011.1"/>
    <property type="molecule type" value="Genomic_DNA"/>
</dbReference>
<dbReference type="RefSeq" id="WP_011373352.1">
    <property type="nucleotide sequence ID" value="NC_007575.1"/>
</dbReference>
<dbReference type="SMR" id="Q30PS0"/>
<dbReference type="STRING" id="326298.Suden_1737"/>
<dbReference type="KEGG" id="tdn:Suden_1737"/>
<dbReference type="eggNOG" id="COG0621">
    <property type="taxonomic scope" value="Bacteria"/>
</dbReference>
<dbReference type="HOGENOM" id="CLU_018697_0_1_7"/>
<dbReference type="OrthoDB" id="9805215at2"/>
<dbReference type="Proteomes" id="UP000002714">
    <property type="component" value="Chromosome"/>
</dbReference>
<dbReference type="GO" id="GO:0005829">
    <property type="term" value="C:cytosol"/>
    <property type="evidence" value="ECO:0007669"/>
    <property type="project" value="TreeGrafter"/>
</dbReference>
<dbReference type="GO" id="GO:0051539">
    <property type="term" value="F:4 iron, 4 sulfur cluster binding"/>
    <property type="evidence" value="ECO:0007669"/>
    <property type="project" value="UniProtKB-UniRule"/>
</dbReference>
<dbReference type="GO" id="GO:0035599">
    <property type="term" value="F:aspartic acid methylthiotransferase activity"/>
    <property type="evidence" value="ECO:0007669"/>
    <property type="project" value="TreeGrafter"/>
</dbReference>
<dbReference type="GO" id="GO:0046872">
    <property type="term" value="F:metal ion binding"/>
    <property type="evidence" value="ECO:0007669"/>
    <property type="project" value="UniProtKB-KW"/>
</dbReference>
<dbReference type="GO" id="GO:0103039">
    <property type="term" value="F:protein methylthiotransferase activity"/>
    <property type="evidence" value="ECO:0007669"/>
    <property type="project" value="UniProtKB-EC"/>
</dbReference>
<dbReference type="GO" id="GO:0006400">
    <property type="term" value="P:tRNA modification"/>
    <property type="evidence" value="ECO:0007669"/>
    <property type="project" value="InterPro"/>
</dbReference>
<dbReference type="CDD" id="cd01335">
    <property type="entry name" value="Radical_SAM"/>
    <property type="match status" value="1"/>
</dbReference>
<dbReference type="Gene3D" id="3.40.50.12160">
    <property type="entry name" value="Methylthiotransferase, N-terminal domain"/>
    <property type="match status" value="1"/>
</dbReference>
<dbReference type="Gene3D" id="2.40.50.140">
    <property type="entry name" value="Nucleic acid-binding proteins"/>
    <property type="match status" value="1"/>
</dbReference>
<dbReference type="Gene3D" id="3.80.30.20">
    <property type="entry name" value="tm_1862 like domain"/>
    <property type="match status" value="1"/>
</dbReference>
<dbReference type="HAMAP" id="MF_01865">
    <property type="entry name" value="MTTase_RimO"/>
    <property type="match status" value="1"/>
</dbReference>
<dbReference type="InterPro" id="IPR006638">
    <property type="entry name" value="Elp3/MiaA/NifB-like_rSAM"/>
</dbReference>
<dbReference type="InterPro" id="IPR005839">
    <property type="entry name" value="Methylthiotransferase"/>
</dbReference>
<dbReference type="InterPro" id="IPR020612">
    <property type="entry name" value="Methylthiotransferase_CS"/>
</dbReference>
<dbReference type="InterPro" id="IPR013848">
    <property type="entry name" value="Methylthiotransferase_N"/>
</dbReference>
<dbReference type="InterPro" id="IPR038135">
    <property type="entry name" value="Methylthiotransferase_N_sf"/>
</dbReference>
<dbReference type="InterPro" id="IPR012340">
    <property type="entry name" value="NA-bd_OB-fold"/>
</dbReference>
<dbReference type="InterPro" id="IPR005840">
    <property type="entry name" value="Ribosomal_uS12_MeSTrfase_RimO"/>
</dbReference>
<dbReference type="InterPro" id="IPR007197">
    <property type="entry name" value="rSAM"/>
</dbReference>
<dbReference type="InterPro" id="IPR023404">
    <property type="entry name" value="rSAM_horseshoe"/>
</dbReference>
<dbReference type="InterPro" id="IPR002792">
    <property type="entry name" value="TRAM_dom"/>
</dbReference>
<dbReference type="NCBIfam" id="TIGR01125">
    <property type="entry name" value="30S ribosomal protein S12 methylthiotransferase RimO"/>
    <property type="match status" value="1"/>
</dbReference>
<dbReference type="NCBIfam" id="TIGR00089">
    <property type="entry name" value="MiaB/RimO family radical SAM methylthiotransferase"/>
    <property type="match status" value="1"/>
</dbReference>
<dbReference type="PANTHER" id="PTHR43837">
    <property type="entry name" value="RIBOSOMAL PROTEIN S12 METHYLTHIOTRANSFERASE RIMO"/>
    <property type="match status" value="1"/>
</dbReference>
<dbReference type="PANTHER" id="PTHR43837:SF1">
    <property type="entry name" value="RIBOSOMAL PROTEIN US12 METHYLTHIOTRANSFERASE RIMO"/>
    <property type="match status" value="1"/>
</dbReference>
<dbReference type="Pfam" id="PF04055">
    <property type="entry name" value="Radical_SAM"/>
    <property type="match status" value="1"/>
</dbReference>
<dbReference type="Pfam" id="PF18693">
    <property type="entry name" value="TRAM_2"/>
    <property type="match status" value="1"/>
</dbReference>
<dbReference type="Pfam" id="PF00919">
    <property type="entry name" value="UPF0004"/>
    <property type="match status" value="1"/>
</dbReference>
<dbReference type="SFLD" id="SFLDG01082">
    <property type="entry name" value="B12-binding_domain_containing"/>
    <property type="match status" value="1"/>
</dbReference>
<dbReference type="SFLD" id="SFLDS00029">
    <property type="entry name" value="Radical_SAM"/>
    <property type="match status" value="1"/>
</dbReference>
<dbReference type="SFLD" id="SFLDF00274">
    <property type="entry name" value="ribosomal_protein_S12_methylth"/>
    <property type="match status" value="1"/>
</dbReference>
<dbReference type="SMART" id="SM00729">
    <property type="entry name" value="Elp3"/>
    <property type="match status" value="1"/>
</dbReference>
<dbReference type="SUPFAM" id="SSF102114">
    <property type="entry name" value="Radical SAM enzymes"/>
    <property type="match status" value="1"/>
</dbReference>
<dbReference type="PROSITE" id="PS51449">
    <property type="entry name" value="MTTASE_N"/>
    <property type="match status" value="1"/>
</dbReference>
<dbReference type="PROSITE" id="PS01278">
    <property type="entry name" value="MTTASE_RADICAL"/>
    <property type="match status" value="1"/>
</dbReference>
<dbReference type="PROSITE" id="PS51918">
    <property type="entry name" value="RADICAL_SAM"/>
    <property type="match status" value="1"/>
</dbReference>
<evidence type="ECO:0000255" key="1">
    <source>
        <dbReference type="HAMAP-Rule" id="MF_01865"/>
    </source>
</evidence>
<evidence type="ECO:0000255" key="2">
    <source>
        <dbReference type="PROSITE-ProRule" id="PRU01266"/>
    </source>
</evidence>